<dbReference type="EC" id="3.6.5.n1" evidence="1"/>
<dbReference type="EMBL" id="AE017243">
    <property type="protein sequence ID" value="AAZ44163.1"/>
    <property type="molecule type" value="Genomic_DNA"/>
</dbReference>
<dbReference type="RefSeq" id="WP_011283888.1">
    <property type="nucleotide sequence ID" value="NC_007295.1"/>
</dbReference>
<dbReference type="SMR" id="Q4AAQ8"/>
<dbReference type="GeneID" id="41334359"/>
<dbReference type="KEGG" id="mhj:MHJ_0069"/>
<dbReference type="eggNOG" id="COG0481">
    <property type="taxonomic scope" value="Bacteria"/>
</dbReference>
<dbReference type="HOGENOM" id="CLU_009995_3_3_14"/>
<dbReference type="OrthoDB" id="9804431at2"/>
<dbReference type="Proteomes" id="UP000000548">
    <property type="component" value="Chromosome"/>
</dbReference>
<dbReference type="GO" id="GO:0005886">
    <property type="term" value="C:plasma membrane"/>
    <property type="evidence" value="ECO:0007669"/>
    <property type="project" value="UniProtKB-SubCell"/>
</dbReference>
<dbReference type="GO" id="GO:0005525">
    <property type="term" value="F:GTP binding"/>
    <property type="evidence" value="ECO:0007669"/>
    <property type="project" value="UniProtKB-UniRule"/>
</dbReference>
<dbReference type="GO" id="GO:0003924">
    <property type="term" value="F:GTPase activity"/>
    <property type="evidence" value="ECO:0007669"/>
    <property type="project" value="UniProtKB-UniRule"/>
</dbReference>
<dbReference type="GO" id="GO:0043022">
    <property type="term" value="F:ribosome binding"/>
    <property type="evidence" value="ECO:0007669"/>
    <property type="project" value="UniProtKB-UniRule"/>
</dbReference>
<dbReference type="GO" id="GO:0003746">
    <property type="term" value="F:translation elongation factor activity"/>
    <property type="evidence" value="ECO:0007669"/>
    <property type="project" value="UniProtKB-UniRule"/>
</dbReference>
<dbReference type="GO" id="GO:0045727">
    <property type="term" value="P:positive regulation of translation"/>
    <property type="evidence" value="ECO:0007669"/>
    <property type="project" value="UniProtKB-UniRule"/>
</dbReference>
<dbReference type="CDD" id="cd03699">
    <property type="entry name" value="EF4_II"/>
    <property type="match status" value="1"/>
</dbReference>
<dbReference type="CDD" id="cd16260">
    <property type="entry name" value="EF4_III"/>
    <property type="match status" value="1"/>
</dbReference>
<dbReference type="CDD" id="cd01890">
    <property type="entry name" value="LepA"/>
    <property type="match status" value="1"/>
</dbReference>
<dbReference type="CDD" id="cd03709">
    <property type="entry name" value="lepA_C"/>
    <property type="match status" value="1"/>
</dbReference>
<dbReference type="FunFam" id="3.40.50.300:FF:000078">
    <property type="entry name" value="Elongation factor 4"/>
    <property type="match status" value="1"/>
</dbReference>
<dbReference type="FunFam" id="2.40.30.10:FF:000015">
    <property type="entry name" value="Translation factor GUF1, mitochondrial"/>
    <property type="match status" value="1"/>
</dbReference>
<dbReference type="FunFam" id="3.30.70.240:FF:000007">
    <property type="entry name" value="Translation factor GUF1, mitochondrial"/>
    <property type="match status" value="1"/>
</dbReference>
<dbReference type="FunFam" id="3.30.70.2570:FF:000001">
    <property type="entry name" value="Translation factor GUF1, mitochondrial"/>
    <property type="match status" value="1"/>
</dbReference>
<dbReference type="FunFam" id="3.30.70.870:FF:000004">
    <property type="entry name" value="Translation factor GUF1, mitochondrial"/>
    <property type="match status" value="1"/>
</dbReference>
<dbReference type="Gene3D" id="3.30.70.240">
    <property type="match status" value="1"/>
</dbReference>
<dbReference type="Gene3D" id="3.30.70.2570">
    <property type="entry name" value="Elongation factor 4, C-terminal domain"/>
    <property type="match status" value="1"/>
</dbReference>
<dbReference type="Gene3D" id="3.30.70.870">
    <property type="entry name" value="Elongation Factor G (Translational Gtpase), domain 3"/>
    <property type="match status" value="1"/>
</dbReference>
<dbReference type="Gene3D" id="3.40.50.300">
    <property type="entry name" value="P-loop containing nucleotide triphosphate hydrolases"/>
    <property type="match status" value="1"/>
</dbReference>
<dbReference type="Gene3D" id="2.40.30.10">
    <property type="entry name" value="Translation factors"/>
    <property type="match status" value="1"/>
</dbReference>
<dbReference type="HAMAP" id="MF_00071">
    <property type="entry name" value="LepA"/>
    <property type="match status" value="1"/>
</dbReference>
<dbReference type="InterPro" id="IPR006297">
    <property type="entry name" value="EF-4"/>
</dbReference>
<dbReference type="InterPro" id="IPR035647">
    <property type="entry name" value="EFG_III/V"/>
</dbReference>
<dbReference type="InterPro" id="IPR000640">
    <property type="entry name" value="EFG_V-like"/>
</dbReference>
<dbReference type="InterPro" id="IPR004161">
    <property type="entry name" value="EFTu-like_2"/>
</dbReference>
<dbReference type="InterPro" id="IPR031157">
    <property type="entry name" value="G_TR_CS"/>
</dbReference>
<dbReference type="InterPro" id="IPR038363">
    <property type="entry name" value="LepA_C_sf"/>
</dbReference>
<dbReference type="InterPro" id="IPR013842">
    <property type="entry name" value="LepA_CTD"/>
</dbReference>
<dbReference type="InterPro" id="IPR035654">
    <property type="entry name" value="LepA_IV"/>
</dbReference>
<dbReference type="InterPro" id="IPR027417">
    <property type="entry name" value="P-loop_NTPase"/>
</dbReference>
<dbReference type="InterPro" id="IPR005225">
    <property type="entry name" value="Small_GTP-bd"/>
</dbReference>
<dbReference type="InterPro" id="IPR000795">
    <property type="entry name" value="T_Tr_GTP-bd_dom"/>
</dbReference>
<dbReference type="InterPro" id="IPR009000">
    <property type="entry name" value="Transl_B-barrel_sf"/>
</dbReference>
<dbReference type="NCBIfam" id="TIGR01393">
    <property type="entry name" value="lepA"/>
    <property type="match status" value="1"/>
</dbReference>
<dbReference type="NCBIfam" id="TIGR00231">
    <property type="entry name" value="small_GTP"/>
    <property type="match status" value="1"/>
</dbReference>
<dbReference type="PANTHER" id="PTHR43512:SF4">
    <property type="entry name" value="TRANSLATION FACTOR GUF1 HOMOLOG, CHLOROPLASTIC"/>
    <property type="match status" value="1"/>
</dbReference>
<dbReference type="PANTHER" id="PTHR43512">
    <property type="entry name" value="TRANSLATION FACTOR GUF1-RELATED"/>
    <property type="match status" value="1"/>
</dbReference>
<dbReference type="Pfam" id="PF00679">
    <property type="entry name" value="EFG_C"/>
    <property type="match status" value="1"/>
</dbReference>
<dbReference type="Pfam" id="PF00009">
    <property type="entry name" value="GTP_EFTU"/>
    <property type="match status" value="1"/>
</dbReference>
<dbReference type="Pfam" id="PF03144">
    <property type="entry name" value="GTP_EFTU_D2"/>
    <property type="match status" value="1"/>
</dbReference>
<dbReference type="Pfam" id="PF06421">
    <property type="entry name" value="LepA_C"/>
    <property type="match status" value="1"/>
</dbReference>
<dbReference type="PRINTS" id="PR00315">
    <property type="entry name" value="ELONGATNFCT"/>
</dbReference>
<dbReference type="SUPFAM" id="SSF54980">
    <property type="entry name" value="EF-G C-terminal domain-like"/>
    <property type="match status" value="2"/>
</dbReference>
<dbReference type="SUPFAM" id="SSF52540">
    <property type="entry name" value="P-loop containing nucleoside triphosphate hydrolases"/>
    <property type="match status" value="1"/>
</dbReference>
<dbReference type="SUPFAM" id="SSF50447">
    <property type="entry name" value="Translation proteins"/>
    <property type="match status" value="1"/>
</dbReference>
<dbReference type="PROSITE" id="PS00301">
    <property type="entry name" value="G_TR_1"/>
    <property type="match status" value="1"/>
</dbReference>
<dbReference type="PROSITE" id="PS51722">
    <property type="entry name" value="G_TR_2"/>
    <property type="match status" value="1"/>
</dbReference>
<feature type="chain" id="PRO_0000224775" description="Elongation factor 4">
    <location>
        <begin position="1"/>
        <end position="598"/>
    </location>
</feature>
<feature type="domain" description="tr-type G">
    <location>
        <begin position="4"/>
        <end position="181"/>
    </location>
</feature>
<feature type="binding site" evidence="1">
    <location>
        <begin position="16"/>
        <end position="21"/>
    </location>
    <ligand>
        <name>GTP</name>
        <dbReference type="ChEBI" id="CHEBI:37565"/>
    </ligand>
</feature>
<feature type="binding site" evidence="1">
    <location>
        <begin position="128"/>
        <end position="131"/>
    </location>
    <ligand>
        <name>GTP</name>
        <dbReference type="ChEBI" id="CHEBI:37565"/>
    </ligand>
</feature>
<sequence length="598" mass="67300">MDNKKIRNFAIIAHIDHGKSTLADRILEFTNTVSKRDLKEQHLDSMDLEKERGITIKLNAVQIRYNSYIFHLIDTPGHVDFTYEVSRSLAATEGALLLVDASQGIQAQTLANVYLALENNLEIIPIINKIDLPSANVDKVKAEIENTIGISAENAILISAKNGIGIEKVLEAIVNLIPPPQASDEKDPLKALVFDSYFDIYRGVIIFIRVVTGKISVGDTFKFMANNLKFSVIELGISSPNQVKKEALFAGEVGWVAASIRNAKDVEVGDTITLVENPAKSPLPGYKKLVPVMYTGFYPVDSQQYNLLKDSLEKISLSDSSIIYEPESSKALGFGFRIGFLGLLHMEILQERLEREFNLSIIATAPSVEFQITRTNGQVQIISNPSLFPEPNFISEIREPYILAKIFLPEEFLGQIMGLCQDKRGIYVDLEYIDDFRRRLIYKLPLVEVIFDFFDRLKSLSKGYASFEYEVIDYQVSKLQKLDILLNGQKIDALSMIVHKDFAYPKARDLTQKLKEIIPRHSFEVPVQAVIGSKVIARETIKAYRKDVTAKLYGGDVTRRKKLLEKQKAGKKRMKSFGVVDVPQEAFLAILKTNVSEK</sequence>
<name>LEPA_MESHJ</name>
<evidence type="ECO:0000255" key="1">
    <source>
        <dbReference type="HAMAP-Rule" id="MF_00071"/>
    </source>
</evidence>
<organism>
    <name type="scientific">Mesomycoplasma hyopneumoniae (strain J / ATCC 25934 / NCTC 10110)</name>
    <name type="common">Mycoplasma hyopneumoniae</name>
    <dbReference type="NCBI Taxonomy" id="262719"/>
    <lineage>
        <taxon>Bacteria</taxon>
        <taxon>Bacillati</taxon>
        <taxon>Mycoplasmatota</taxon>
        <taxon>Mycoplasmoidales</taxon>
        <taxon>Metamycoplasmataceae</taxon>
        <taxon>Mesomycoplasma</taxon>
    </lineage>
</organism>
<keyword id="KW-1003">Cell membrane</keyword>
<keyword id="KW-0342">GTP-binding</keyword>
<keyword id="KW-0378">Hydrolase</keyword>
<keyword id="KW-0472">Membrane</keyword>
<keyword id="KW-0547">Nucleotide-binding</keyword>
<keyword id="KW-0648">Protein biosynthesis</keyword>
<accession>Q4AAQ8</accession>
<proteinExistence type="inferred from homology"/>
<comment type="function">
    <text evidence="1">Required for accurate and efficient protein synthesis under certain stress conditions. May act as a fidelity factor of the translation reaction, by catalyzing a one-codon backward translocation of tRNAs on improperly translocated ribosomes. Back-translocation proceeds from a post-translocation (POST) complex to a pre-translocation (PRE) complex, thus giving elongation factor G a second chance to translocate the tRNAs correctly. Binds to ribosomes in a GTP-dependent manner.</text>
</comment>
<comment type="catalytic activity">
    <reaction evidence="1">
        <text>GTP + H2O = GDP + phosphate + H(+)</text>
        <dbReference type="Rhea" id="RHEA:19669"/>
        <dbReference type="ChEBI" id="CHEBI:15377"/>
        <dbReference type="ChEBI" id="CHEBI:15378"/>
        <dbReference type="ChEBI" id="CHEBI:37565"/>
        <dbReference type="ChEBI" id="CHEBI:43474"/>
        <dbReference type="ChEBI" id="CHEBI:58189"/>
        <dbReference type="EC" id="3.6.5.n1"/>
    </reaction>
</comment>
<comment type="subcellular location">
    <subcellularLocation>
        <location evidence="1">Cell membrane</location>
        <topology evidence="1">Peripheral membrane protein</topology>
        <orientation evidence="1">Cytoplasmic side</orientation>
    </subcellularLocation>
</comment>
<comment type="similarity">
    <text evidence="1">Belongs to the TRAFAC class translation factor GTPase superfamily. Classic translation factor GTPase family. LepA subfamily.</text>
</comment>
<reference key="1">
    <citation type="journal article" date="2005" name="J. Bacteriol.">
        <title>Swine and poultry pathogens: the complete genome sequences of two strains of Mycoplasma hyopneumoniae and a strain of Mycoplasma synoviae.</title>
        <authorList>
            <person name="Vasconcelos A.T.R."/>
            <person name="Ferreira H.B."/>
            <person name="Bizarro C.V."/>
            <person name="Bonatto S.L."/>
            <person name="Carvalho M.O."/>
            <person name="Pinto P.M."/>
            <person name="Almeida D.F."/>
            <person name="Almeida L.G.P."/>
            <person name="Almeida R."/>
            <person name="Alves-Junior L."/>
            <person name="Assuncao E.N."/>
            <person name="Azevedo V.A.C."/>
            <person name="Bogo M.R."/>
            <person name="Brigido M.M."/>
            <person name="Brocchi M."/>
            <person name="Burity H.A."/>
            <person name="Camargo A.A."/>
            <person name="Camargo S.S."/>
            <person name="Carepo M.S."/>
            <person name="Carraro D.M."/>
            <person name="de Mattos Cascardo J.C."/>
            <person name="Castro L.A."/>
            <person name="Cavalcanti G."/>
            <person name="Chemale G."/>
            <person name="Collevatti R.G."/>
            <person name="Cunha C.W."/>
            <person name="Dallagiovanna B."/>
            <person name="Dambros B.P."/>
            <person name="Dellagostin O.A."/>
            <person name="Falcao C."/>
            <person name="Fantinatti-Garboggini F."/>
            <person name="Felipe M.S.S."/>
            <person name="Fiorentin L."/>
            <person name="Franco G.R."/>
            <person name="Freitas N.S.A."/>
            <person name="Frias D."/>
            <person name="Grangeiro T.B."/>
            <person name="Grisard E.C."/>
            <person name="Guimaraes C.T."/>
            <person name="Hungria M."/>
            <person name="Jardim S.N."/>
            <person name="Krieger M.A."/>
            <person name="Laurino J.P."/>
            <person name="Lima L.F.A."/>
            <person name="Lopes M.I."/>
            <person name="Loreto E.L.S."/>
            <person name="Madeira H.M.F."/>
            <person name="Manfio G.P."/>
            <person name="Maranhao A.Q."/>
            <person name="Martinkovics C.T."/>
            <person name="Medeiros S.R.B."/>
            <person name="Moreira M.A.M."/>
            <person name="Neiva M."/>
            <person name="Ramalho-Neto C.E."/>
            <person name="Nicolas M.F."/>
            <person name="Oliveira S.C."/>
            <person name="Paixao R.F.C."/>
            <person name="Pedrosa F.O."/>
            <person name="Pena S.D.J."/>
            <person name="Pereira M."/>
            <person name="Pereira-Ferrari L."/>
            <person name="Piffer I."/>
            <person name="Pinto L.S."/>
            <person name="Potrich D.P."/>
            <person name="Salim A.C.M."/>
            <person name="Santos F.R."/>
            <person name="Schmitt R."/>
            <person name="Schneider M.P.C."/>
            <person name="Schrank A."/>
            <person name="Schrank I.S."/>
            <person name="Schuck A.F."/>
            <person name="Seuanez H.N."/>
            <person name="Silva D.W."/>
            <person name="Silva R."/>
            <person name="Silva S.C."/>
            <person name="Soares C.M.A."/>
            <person name="Souza K.R.L."/>
            <person name="Souza R.C."/>
            <person name="Staats C.C."/>
            <person name="Steffens M.B.R."/>
            <person name="Teixeira S.M.R."/>
            <person name="Urmenyi T.P."/>
            <person name="Vainstein M.H."/>
            <person name="Zuccherato L.W."/>
            <person name="Simpson A.J.G."/>
            <person name="Zaha A."/>
        </authorList>
    </citation>
    <scope>NUCLEOTIDE SEQUENCE [LARGE SCALE GENOMIC DNA]</scope>
    <source>
        <strain>J / ATCC 25934 / NCTC 10110</strain>
    </source>
</reference>
<protein>
    <recommendedName>
        <fullName evidence="1">Elongation factor 4</fullName>
        <shortName evidence="1">EF-4</shortName>
        <ecNumber evidence="1">3.6.5.n1</ecNumber>
    </recommendedName>
    <alternativeName>
        <fullName evidence="1">Ribosomal back-translocase LepA</fullName>
    </alternativeName>
</protein>
<gene>
    <name evidence="1" type="primary">lepA</name>
    <name type="ordered locus">MHJ_0069</name>
</gene>